<accession>Q97ZY3</accession>
<dbReference type="EC" id="4.6.1.16" evidence="1"/>
<dbReference type="EMBL" id="AE006641">
    <property type="protein sequence ID" value="AAK40764.1"/>
    <property type="molecule type" value="Genomic_DNA"/>
</dbReference>
<dbReference type="PIR" id="E90188">
    <property type="entry name" value="E90188"/>
</dbReference>
<dbReference type="RefSeq" id="WP_009988732.1">
    <property type="nucleotide sequence ID" value="NC_002754.1"/>
</dbReference>
<dbReference type="SMR" id="Q97ZY3"/>
<dbReference type="STRING" id="273057.SSO0439"/>
<dbReference type="PaxDb" id="273057-SSO0439"/>
<dbReference type="EnsemblBacteria" id="AAK40764">
    <property type="protein sequence ID" value="AAK40764"/>
    <property type="gene ID" value="SSO0439"/>
</dbReference>
<dbReference type="GeneID" id="44129418"/>
<dbReference type="KEGG" id="sso:SSO0439"/>
<dbReference type="PATRIC" id="fig|273057.12.peg.432"/>
<dbReference type="eggNOG" id="arCOG01701">
    <property type="taxonomic scope" value="Archaea"/>
</dbReference>
<dbReference type="HOGENOM" id="CLU_114393_0_0_2"/>
<dbReference type="InParanoid" id="Q97ZY3"/>
<dbReference type="PhylomeDB" id="Q97ZY3"/>
<dbReference type="Proteomes" id="UP000001974">
    <property type="component" value="Chromosome"/>
</dbReference>
<dbReference type="GO" id="GO:0005737">
    <property type="term" value="C:cytoplasm"/>
    <property type="evidence" value="ECO:0000318"/>
    <property type="project" value="GO_Central"/>
</dbReference>
<dbReference type="GO" id="GO:0004519">
    <property type="term" value="F:endonuclease activity"/>
    <property type="evidence" value="ECO:0000318"/>
    <property type="project" value="GO_Central"/>
</dbReference>
<dbReference type="GO" id="GO:0016829">
    <property type="term" value="F:lyase activity"/>
    <property type="evidence" value="ECO:0007669"/>
    <property type="project" value="UniProtKB-KW"/>
</dbReference>
<dbReference type="GO" id="GO:0003676">
    <property type="term" value="F:nucleic acid binding"/>
    <property type="evidence" value="ECO:0007669"/>
    <property type="project" value="InterPro"/>
</dbReference>
<dbReference type="GO" id="GO:0000213">
    <property type="term" value="F:tRNA-intron endonuclease activity"/>
    <property type="evidence" value="ECO:0007669"/>
    <property type="project" value="UniProtKB-UniRule"/>
</dbReference>
<dbReference type="GO" id="GO:0008033">
    <property type="term" value="P:tRNA processing"/>
    <property type="evidence" value="ECO:0000318"/>
    <property type="project" value="GO_Central"/>
</dbReference>
<dbReference type="GO" id="GO:0006388">
    <property type="term" value="P:tRNA splicing, via endonucleolytic cleavage and ligation"/>
    <property type="evidence" value="ECO:0007669"/>
    <property type="project" value="UniProtKB-UniRule"/>
</dbReference>
<dbReference type="CDD" id="cd22363">
    <property type="entry name" value="tRNA-intron_lyase_C"/>
    <property type="match status" value="1"/>
</dbReference>
<dbReference type="FunFam" id="3.40.1350.10:FF:000006">
    <property type="entry name" value="tRNA-splicing endonuclease"/>
    <property type="match status" value="1"/>
</dbReference>
<dbReference type="Gene3D" id="3.40.1350.10">
    <property type="match status" value="1"/>
</dbReference>
<dbReference type="Gene3D" id="3.40.1170.20">
    <property type="entry name" value="tRNA intron endonuclease, N-terminal domain"/>
    <property type="match status" value="1"/>
</dbReference>
<dbReference type="HAMAP" id="MF_01833">
    <property type="entry name" value="EndA_short"/>
    <property type="match status" value="1"/>
</dbReference>
<dbReference type="InterPro" id="IPR011856">
    <property type="entry name" value="tRNA_endonuc-like_dom_sf"/>
</dbReference>
<dbReference type="InterPro" id="IPR036167">
    <property type="entry name" value="tRNA_intron_Endo_cat-like_sf"/>
</dbReference>
<dbReference type="InterPro" id="IPR006677">
    <property type="entry name" value="tRNA_intron_Endonuc_cat-like"/>
</dbReference>
<dbReference type="InterPro" id="IPR006678">
    <property type="entry name" value="tRNA_intron_Endonuc_N"/>
</dbReference>
<dbReference type="InterPro" id="IPR036740">
    <property type="entry name" value="tRNA_intron_Endonuc_N_sf"/>
</dbReference>
<dbReference type="InterPro" id="IPR006676">
    <property type="entry name" value="tRNA_splic"/>
</dbReference>
<dbReference type="InterPro" id="IPR016442">
    <property type="entry name" value="tRNA_splic_arch_short"/>
</dbReference>
<dbReference type="NCBIfam" id="TIGR00324">
    <property type="entry name" value="endA"/>
    <property type="match status" value="1"/>
</dbReference>
<dbReference type="PANTHER" id="PTHR21227">
    <property type="entry name" value="TRNA-SPLICING ENDONUCLEASE SUBUNIT SEN2"/>
    <property type="match status" value="1"/>
</dbReference>
<dbReference type="PANTHER" id="PTHR21227:SF0">
    <property type="entry name" value="TRNA-SPLICING ENDONUCLEASE SUBUNIT SEN2"/>
    <property type="match status" value="1"/>
</dbReference>
<dbReference type="Pfam" id="PF01974">
    <property type="entry name" value="tRNA_int_endo"/>
    <property type="match status" value="1"/>
</dbReference>
<dbReference type="Pfam" id="PF02778">
    <property type="entry name" value="tRNA_int_endo_N"/>
    <property type="match status" value="1"/>
</dbReference>
<dbReference type="PIRSF" id="PIRSF005285">
    <property type="entry name" value="tRNA_splic_archaea"/>
    <property type="match status" value="1"/>
</dbReference>
<dbReference type="SUPFAM" id="SSF53032">
    <property type="entry name" value="tRNA-intron endonuclease catalytic domain-like"/>
    <property type="match status" value="1"/>
</dbReference>
<dbReference type="SUPFAM" id="SSF55267">
    <property type="entry name" value="tRNA-intron endonuclease N-terminal domain-like"/>
    <property type="match status" value="1"/>
</dbReference>
<evidence type="ECO:0000255" key="1">
    <source>
        <dbReference type="HAMAP-Rule" id="MF_01833"/>
    </source>
</evidence>
<name>ENDA_SACS2</name>
<proteinExistence type="inferred from homology"/>
<protein>
    <recommendedName>
        <fullName evidence="1">tRNA-splicing endonuclease</fullName>
        <ecNumber evidence="1">4.6.1.16</ecNumber>
    </recommendedName>
    <alternativeName>
        <fullName evidence="1">tRNA-intron endonuclease</fullName>
    </alternativeName>
</protein>
<organism>
    <name type="scientific">Saccharolobus solfataricus (strain ATCC 35092 / DSM 1617 / JCM 11322 / P2)</name>
    <name type="common">Sulfolobus solfataricus</name>
    <dbReference type="NCBI Taxonomy" id="273057"/>
    <lineage>
        <taxon>Archaea</taxon>
        <taxon>Thermoproteota</taxon>
        <taxon>Thermoprotei</taxon>
        <taxon>Sulfolobales</taxon>
        <taxon>Sulfolobaceae</taxon>
        <taxon>Saccharolobus</taxon>
    </lineage>
</organism>
<gene>
    <name evidence="1" type="primary">endA</name>
    <name type="ordered locus">SSO0439</name>
</gene>
<sequence>MVKALLVGSKVLVPSIDESRYLYSNGFYGKPIGISKPKGPKDIVRPLELSLIESVYLTKKGLINVVDKNGDLLEYKKLYEYSAMKINKFEILYKVYEDLREKGFIVRSGVKYGADFAVYTLGPGLEHAPYVVIAVDIDEEITPHELLSFGRVSHSTKKRLVLALVDRKSEGIRYIMFKWVKM</sequence>
<keyword id="KW-0456">Lyase</keyword>
<keyword id="KW-1185">Reference proteome</keyword>
<keyword id="KW-0819">tRNA processing</keyword>
<comment type="function">
    <text evidence="1">Endonuclease that removes tRNA introns. Cleaves pre-tRNA at the 5'- and 3'-splice sites to release the intron. The products are an intron and two tRNA half-molecules bearing 2',3' cyclic phosphate and 5'-OH termini. Recognizes a pseudosymmetric substrate in which 2 bulged loops of 3 bases are separated by a stem of 4 bp.</text>
</comment>
<comment type="catalytic activity">
    <reaction evidence="1">
        <text>pretRNA = a 3'-half-tRNA molecule with a 5'-OH end + a 5'-half-tRNA molecule with a 2',3'-cyclic phosphate end + an intron with a 2',3'-cyclic phosphate and a 5'-hydroxyl terminus.</text>
        <dbReference type="EC" id="4.6.1.16"/>
    </reaction>
</comment>
<comment type="subunit">
    <text evidence="1">Homotetramer; although the tetramer contains four active sites, only two participate in the cleavage. Therefore, it should be considered as a dimer of dimers.</text>
</comment>
<comment type="similarity">
    <text evidence="1">Belongs to the tRNA-intron endonuclease family. Archaeal short subfamily.</text>
</comment>
<reference key="1">
    <citation type="journal article" date="2001" name="Proc. Natl. Acad. Sci. U.S.A.">
        <title>The complete genome of the crenarchaeon Sulfolobus solfataricus P2.</title>
        <authorList>
            <person name="She Q."/>
            <person name="Singh R.K."/>
            <person name="Confalonieri F."/>
            <person name="Zivanovic Y."/>
            <person name="Allard G."/>
            <person name="Awayez M.J."/>
            <person name="Chan-Weiher C.C.-Y."/>
            <person name="Clausen I.G."/>
            <person name="Curtis B.A."/>
            <person name="De Moors A."/>
            <person name="Erauso G."/>
            <person name="Fletcher C."/>
            <person name="Gordon P.M.K."/>
            <person name="Heikamp-de Jong I."/>
            <person name="Jeffries A.C."/>
            <person name="Kozera C.J."/>
            <person name="Medina N."/>
            <person name="Peng X."/>
            <person name="Thi-Ngoc H.P."/>
            <person name="Redder P."/>
            <person name="Schenk M.E."/>
            <person name="Theriault C."/>
            <person name="Tolstrup N."/>
            <person name="Charlebois R.L."/>
            <person name="Doolittle W.F."/>
            <person name="Duguet M."/>
            <person name="Gaasterland T."/>
            <person name="Garrett R.A."/>
            <person name="Ragan M.A."/>
            <person name="Sensen C.W."/>
            <person name="Van der Oost J."/>
        </authorList>
    </citation>
    <scope>NUCLEOTIDE SEQUENCE [LARGE SCALE GENOMIC DNA]</scope>
    <source>
        <strain>ATCC 35092 / DSM 1617 / JCM 11322 / P2</strain>
    </source>
</reference>
<feature type="chain" id="PRO_0000109481" description="tRNA-splicing endonuclease">
    <location>
        <begin position="1"/>
        <end position="182"/>
    </location>
</feature>
<feature type="active site" evidence="1">
    <location>
        <position position="119"/>
    </location>
</feature>
<feature type="active site" evidence="1">
    <location>
        <position position="127"/>
    </location>
</feature>
<feature type="active site" evidence="1">
    <location>
        <position position="158"/>
    </location>
</feature>